<protein>
    <recommendedName>
        <fullName evidence="1">ATP synthase subunit b</fullName>
    </recommendedName>
    <alternativeName>
        <fullName evidence="1">ATP synthase F(0) sector subunit b</fullName>
    </alternativeName>
    <alternativeName>
        <fullName evidence="1">ATPase subunit I</fullName>
    </alternativeName>
    <alternativeName>
        <fullName evidence="1">F-type ATPase subunit b</fullName>
        <shortName evidence="1">F-ATPase subunit b</shortName>
    </alternativeName>
</protein>
<sequence>MNLNATILGQAIAFVLFVLFCMKYVWPPLMAAIEKRQKEIADGLASAERAHKDLDLAKASATDQLKKAKAEAQVIIEQANKRRSQILDEAKAEAEQERTKIVAQAQAEIEAERKRAREELRKQVAILAVAGAEKIIERSVDEAANSDIVDKLVAEL</sequence>
<comment type="function">
    <text evidence="1">F(1)F(0) ATP synthase produces ATP from ADP in the presence of a proton or sodium gradient. F-type ATPases consist of two structural domains, F(1) containing the extramembraneous catalytic core and F(0) containing the membrane proton channel, linked together by a central stalk and a peripheral stalk. During catalysis, ATP synthesis in the catalytic domain of F(1) is coupled via a rotary mechanism of the central stalk subunits to proton translocation.</text>
</comment>
<comment type="function">
    <text evidence="1">Component of the F(0) channel, it forms part of the peripheral stalk, linking F(1) to F(0).</text>
</comment>
<comment type="subunit">
    <text evidence="1">F-type ATPases have 2 components, F(1) - the catalytic core - and F(0) - the membrane proton channel. F(1) has five subunits: alpha(3), beta(3), gamma(1), delta(1), epsilon(1). F(0) has three main subunits: a(1), b(2) and c(10-14). The alpha and beta chains form an alternating ring which encloses part of the gamma chain. F(1) is attached to F(0) by a central stalk formed by the gamma and epsilon chains, while a peripheral stalk is formed by the delta and b chains.</text>
</comment>
<comment type="subcellular location">
    <subcellularLocation>
        <location evidence="1">Cell inner membrane</location>
        <topology evidence="1">Single-pass membrane protein</topology>
    </subcellularLocation>
</comment>
<comment type="similarity">
    <text evidence="1">Belongs to the ATPase B chain family.</text>
</comment>
<accession>P0ABA2</accession>
<accession>P00859</accession>
<organism>
    <name type="scientific">Escherichia coli O157:H7</name>
    <dbReference type="NCBI Taxonomy" id="83334"/>
    <lineage>
        <taxon>Bacteria</taxon>
        <taxon>Pseudomonadati</taxon>
        <taxon>Pseudomonadota</taxon>
        <taxon>Gammaproteobacteria</taxon>
        <taxon>Enterobacterales</taxon>
        <taxon>Enterobacteriaceae</taxon>
        <taxon>Escherichia</taxon>
    </lineage>
</organism>
<feature type="chain" id="PRO_0000082372" description="ATP synthase subunit b">
    <location>
        <begin position="1"/>
        <end position="156"/>
    </location>
</feature>
<feature type="transmembrane region" description="Helical" evidence="1">
    <location>
        <begin position="11"/>
        <end position="31"/>
    </location>
</feature>
<dbReference type="EMBL" id="AE005174">
    <property type="protein sequence ID" value="AAG58939.1"/>
    <property type="molecule type" value="Genomic_DNA"/>
</dbReference>
<dbReference type="EMBL" id="BA000007">
    <property type="protein sequence ID" value="BAB38101.1"/>
    <property type="molecule type" value="Genomic_DNA"/>
</dbReference>
<dbReference type="PIR" id="F91213">
    <property type="entry name" value="F91213"/>
</dbReference>
<dbReference type="PIR" id="G86059">
    <property type="entry name" value="G86059"/>
</dbReference>
<dbReference type="RefSeq" id="NP_312705.1">
    <property type="nucleotide sequence ID" value="NC_002695.1"/>
</dbReference>
<dbReference type="RefSeq" id="WP_001052219.1">
    <property type="nucleotide sequence ID" value="NZ_VOAI01000011.1"/>
</dbReference>
<dbReference type="EMDB" id="EMD-8357"/>
<dbReference type="EMDB" id="EMD-8358"/>
<dbReference type="EMDB" id="EMD-8359"/>
<dbReference type="SMR" id="P0ABA2"/>
<dbReference type="STRING" id="155864.Z5234"/>
<dbReference type="GeneID" id="915334"/>
<dbReference type="GeneID" id="93778231"/>
<dbReference type="KEGG" id="ece:Z5234"/>
<dbReference type="KEGG" id="ecs:ECs_4678"/>
<dbReference type="PATRIC" id="fig|386585.9.peg.4883"/>
<dbReference type="eggNOG" id="COG0711">
    <property type="taxonomic scope" value="Bacteria"/>
</dbReference>
<dbReference type="HOGENOM" id="CLU_079215_4_5_6"/>
<dbReference type="OMA" id="ILAWFTM"/>
<dbReference type="Proteomes" id="UP000000558">
    <property type="component" value="Chromosome"/>
</dbReference>
<dbReference type="Proteomes" id="UP000002519">
    <property type="component" value="Chromosome"/>
</dbReference>
<dbReference type="GO" id="GO:0005886">
    <property type="term" value="C:plasma membrane"/>
    <property type="evidence" value="ECO:0007669"/>
    <property type="project" value="UniProtKB-SubCell"/>
</dbReference>
<dbReference type="GO" id="GO:0045259">
    <property type="term" value="C:proton-transporting ATP synthase complex"/>
    <property type="evidence" value="ECO:0007669"/>
    <property type="project" value="UniProtKB-KW"/>
</dbReference>
<dbReference type="GO" id="GO:0046933">
    <property type="term" value="F:proton-transporting ATP synthase activity, rotational mechanism"/>
    <property type="evidence" value="ECO:0007669"/>
    <property type="project" value="UniProtKB-UniRule"/>
</dbReference>
<dbReference type="GO" id="GO:0046961">
    <property type="term" value="F:proton-transporting ATPase activity, rotational mechanism"/>
    <property type="evidence" value="ECO:0007669"/>
    <property type="project" value="TreeGrafter"/>
</dbReference>
<dbReference type="CDD" id="cd06503">
    <property type="entry name" value="ATP-synt_Fo_b"/>
    <property type="match status" value="1"/>
</dbReference>
<dbReference type="FunFam" id="1.20.5.620:FF:000001">
    <property type="entry name" value="ATP synthase subunit b"/>
    <property type="match status" value="1"/>
</dbReference>
<dbReference type="Gene3D" id="1.20.5.620">
    <property type="entry name" value="F1F0 ATP synthase subunit B, membrane domain"/>
    <property type="match status" value="1"/>
</dbReference>
<dbReference type="HAMAP" id="MF_01398">
    <property type="entry name" value="ATP_synth_b_bprime"/>
    <property type="match status" value="1"/>
</dbReference>
<dbReference type="InterPro" id="IPR028987">
    <property type="entry name" value="ATP_synth_B-like_membr_sf"/>
</dbReference>
<dbReference type="InterPro" id="IPR002146">
    <property type="entry name" value="ATP_synth_b/b'su_bac/chlpt"/>
</dbReference>
<dbReference type="InterPro" id="IPR005864">
    <property type="entry name" value="ATP_synth_F0_bsu_bac"/>
</dbReference>
<dbReference type="InterPro" id="IPR050059">
    <property type="entry name" value="ATP_synthase_B_chain"/>
</dbReference>
<dbReference type="NCBIfam" id="TIGR01144">
    <property type="entry name" value="ATP_synt_b"/>
    <property type="match status" value="1"/>
</dbReference>
<dbReference type="NCBIfam" id="NF004411">
    <property type="entry name" value="PRK05759.1-2"/>
    <property type="match status" value="1"/>
</dbReference>
<dbReference type="NCBIfam" id="NF004413">
    <property type="entry name" value="PRK05759.1-4"/>
    <property type="match status" value="1"/>
</dbReference>
<dbReference type="PANTHER" id="PTHR33445:SF1">
    <property type="entry name" value="ATP SYNTHASE SUBUNIT B"/>
    <property type="match status" value="1"/>
</dbReference>
<dbReference type="PANTHER" id="PTHR33445">
    <property type="entry name" value="ATP SYNTHASE SUBUNIT B', CHLOROPLASTIC"/>
    <property type="match status" value="1"/>
</dbReference>
<dbReference type="Pfam" id="PF00430">
    <property type="entry name" value="ATP-synt_B"/>
    <property type="match status" value="1"/>
</dbReference>
<dbReference type="SUPFAM" id="SSF81573">
    <property type="entry name" value="F1F0 ATP synthase subunit B, membrane domain"/>
    <property type="match status" value="1"/>
</dbReference>
<evidence type="ECO:0000255" key="1">
    <source>
        <dbReference type="HAMAP-Rule" id="MF_01398"/>
    </source>
</evidence>
<gene>
    <name evidence="1" type="primary">atpF</name>
    <name type="ordered locus">Z5234</name>
    <name type="ordered locus">ECs4678</name>
</gene>
<name>ATPF_ECO57</name>
<keyword id="KW-0066">ATP synthesis</keyword>
<keyword id="KW-0997">Cell inner membrane</keyword>
<keyword id="KW-1003">Cell membrane</keyword>
<keyword id="KW-0138">CF(0)</keyword>
<keyword id="KW-0375">Hydrogen ion transport</keyword>
<keyword id="KW-0406">Ion transport</keyword>
<keyword id="KW-0472">Membrane</keyword>
<keyword id="KW-1185">Reference proteome</keyword>
<keyword id="KW-0812">Transmembrane</keyword>
<keyword id="KW-1133">Transmembrane helix</keyword>
<keyword id="KW-0813">Transport</keyword>
<reference key="1">
    <citation type="journal article" date="2001" name="Nature">
        <title>Genome sequence of enterohaemorrhagic Escherichia coli O157:H7.</title>
        <authorList>
            <person name="Perna N.T."/>
            <person name="Plunkett G. III"/>
            <person name="Burland V."/>
            <person name="Mau B."/>
            <person name="Glasner J.D."/>
            <person name="Rose D.J."/>
            <person name="Mayhew G.F."/>
            <person name="Evans P.S."/>
            <person name="Gregor J."/>
            <person name="Kirkpatrick H.A."/>
            <person name="Posfai G."/>
            <person name="Hackett J."/>
            <person name="Klink S."/>
            <person name="Boutin A."/>
            <person name="Shao Y."/>
            <person name="Miller L."/>
            <person name="Grotbeck E.J."/>
            <person name="Davis N.W."/>
            <person name="Lim A."/>
            <person name="Dimalanta E.T."/>
            <person name="Potamousis K."/>
            <person name="Apodaca J."/>
            <person name="Anantharaman T.S."/>
            <person name="Lin J."/>
            <person name="Yen G."/>
            <person name="Schwartz D.C."/>
            <person name="Welch R.A."/>
            <person name="Blattner F.R."/>
        </authorList>
    </citation>
    <scope>NUCLEOTIDE SEQUENCE [LARGE SCALE GENOMIC DNA]</scope>
    <source>
        <strain>O157:H7 / EDL933 / ATCC 700927 / EHEC</strain>
    </source>
</reference>
<reference key="2">
    <citation type="journal article" date="2001" name="DNA Res.">
        <title>Complete genome sequence of enterohemorrhagic Escherichia coli O157:H7 and genomic comparison with a laboratory strain K-12.</title>
        <authorList>
            <person name="Hayashi T."/>
            <person name="Makino K."/>
            <person name="Ohnishi M."/>
            <person name="Kurokawa K."/>
            <person name="Ishii K."/>
            <person name="Yokoyama K."/>
            <person name="Han C.-G."/>
            <person name="Ohtsubo E."/>
            <person name="Nakayama K."/>
            <person name="Murata T."/>
            <person name="Tanaka M."/>
            <person name="Tobe T."/>
            <person name="Iida T."/>
            <person name="Takami H."/>
            <person name="Honda T."/>
            <person name="Sasakawa C."/>
            <person name="Ogasawara N."/>
            <person name="Yasunaga T."/>
            <person name="Kuhara S."/>
            <person name="Shiba T."/>
            <person name="Hattori M."/>
            <person name="Shinagawa H."/>
        </authorList>
    </citation>
    <scope>NUCLEOTIDE SEQUENCE [LARGE SCALE GENOMIC DNA]</scope>
    <source>
        <strain>O157:H7 / Sakai / RIMD 0509952 / EHEC</strain>
    </source>
</reference>
<proteinExistence type="inferred from homology"/>